<feature type="chain" id="PRO_0000108695" description="Ribosomal RNA small subunit methyltransferase H">
    <location>
        <begin position="1"/>
        <end position="306"/>
    </location>
</feature>
<feature type="binding site" evidence="1">
    <location>
        <begin position="33"/>
        <end position="35"/>
    </location>
    <ligand>
        <name>S-adenosyl-L-methionine</name>
        <dbReference type="ChEBI" id="CHEBI:59789"/>
    </ligand>
</feature>
<feature type="binding site" evidence="1">
    <location>
        <position position="51"/>
    </location>
    <ligand>
        <name>S-adenosyl-L-methionine</name>
        <dbReference type="ChEBI" id="CHEBI:59789"/>
    </ligand>
</feature>
<feature type="binding site" evidence="1">
    <location>
        <position position="78"/>
    </location>
    <ligand>
        <name>S-adenosyl-L-methionine</name>
        <dbReference type="ChEBI" id="CHEBI:59789"/>
    </ligand>
</feature>
<feature type="binding site" evidence="1">
    <location>
        <position position="96"/>
    </location>
    <ligand>
        <name>S-adenosyl-L-methionine</name>
        <dbReference type="ChEBI" id="CHEBI:59789"/>
    </ligand>
</feature>
<feature type="binding site" evidence="1">
    <location>
        <position position="103"/>
    </location>
    <ligand>
        <name>S-adenosyl-L-methionine</name>
        <dbReference type="ChEBI" id="CHEBI:59789"/>
    </ligand>
</feature>
<proteinExistence type="inferred from homology"/>
<name>RSMH_RICTY</name>
<organism>
    <name type="scientific">Rickettsia typhi (strain ATCC VR-144 / Wilmington)</name>
    <dbReference type="NCBI Taxonomy" id="257363"/>
    <lineage>
        <taxon>Bacteria</taxon>
        <taxon>Pseudomonadati</taxon>
        <taxon>Pseudomonadota</taxon>
        <taxon>Alphaproteobacteria</taxon>
        <taxon>Rickettsiales</taxon>
        <taxon>Rickettsiaceae</taxon>
        <taxon>Rickettsieae</taxon>
        <taxon>Rickettsia</taxon>
        <taxon>typhus group</taxon>
    </lineage>
</organism>
<evidence type="ECO:0000255" key="1">
    <source>
        <dbReference type="HAMAP-Rule" id="MF_01007"/>
    </source>
</evidence>
<keyword id="KW-0963">Cytoplasm</keyword>
<keyword id="KW-0489">Methyltransferase</keyword>
<keyword id="KW-0698">rRNA processing</keyword>
<keyword id="KW-0949">S-adenosyl-L-methionine</keyword>
<keyword id="KW-0808">Transferase</keyword>
<dbReference type="EC" id="2.1.1.199" evidence="1"/>
<dbReference type="EMBL" id="AE017197">
    <property type="protein sequence ID" value="AAU04025.1"/>
    <property type="molecule type" value="Genomic_DNA"/>
</dbReference>
<dbReference type="RefSeq" id="WP_011191006.1">
    <property type="nucleotide sequence ID" value="NC_006142.1"/>
</dbReference>
<dbReference type="SMR" id="Q68WG7"/>
<dbReference type="KEGG" id="rty:RT0557"/>
<dbReference type="eggNOG" id="COG0275">
    <property type="taxonomic scope" value="Bacteria"/>
</dbReference>
<dbReference type="HOGENOM" id="CLU_038422_1_1_5"/>
<dbReference type="OrthoDB" id="9806637at2"/>
<dbReference type="Proteomes" id="UP000000604">
    <property type="component" value="Chromosome"/>
</dbReference>
<dbReference type="GO" id="GO:0005737">
    <property type="term" value="C:cytoplasm"/>
    <property type="evidence" value="ECO:0007669"/>
    <property type="project" value="UniProtKB-SubCell"/>
</dbReference>
<dbReference type="GO" id="GO:0071424">
    <property type="term" value="F:rRNA (cytosine-N4-)-methyltransferase activity"/>
    <property type="evidence" value="ECO:0007669"/>
    <property type="project" value="UniProtKB-UniRule"/>
</dbReference>
<dbReference type="GO" id="GO:0070475">
    <property type="term" value="P:rRNA base methylation"/>
    <property type="evidence" value="ECO:0007669"/>
    <property type="project" value="UniProtKB-UniRule"/>
</dbReference>
<dbReference type="CDD" id="cd02440">
    <property type="entry name" value="AdoMet_MTases"/>
    <property type="match status" value="1"/>
</dbReference>
<dbReference type="FunFam" id="1.10.150.170:FF:000003">
    <property type="entry name" value="Ribosomal RNA small subunit methyltransferase H"/>
    <property type="match status" value="1"/>
</dbReference>
<dbReference type="Gene3D" id="1.10.150.170">
    <property type="entry name" value="Putative methyltransferase TM0872, insert domain"/>
    <property type="match status" value="1"/>
</dbReference>
<dbReference type="Gene3D" id="3.40.50.150">
    <property type="entry name" value="Vaccinia Virus protein VP39"/>
    <property type="match status" value="1"/>
</dbReference>
<dbReference type="HAMAP" id="MF_01007">
    <property type="entry name" value="16SrRNA_methyltr_H"/>
    <property type="match status" value="1"/>
</dbReference>
<dbReference type="InterPro" id="IPR002903">
    <property type="entry name" value="RsmH"/>
</dbReference>
<dbReference type="InterPro" id="IPR023397">
    <property type="entry name" value="SAM-dep_MeTrfase_MraW_recog"/>
</dbReference>
<dbReference type="InterPro" id="IPR029063">
    <property type="entry name" value="SAM-dependent_MTases_sf"/>
</dbReference>
<dbReference type="NCBIfam" id="TIGR00006">
    <property type="entry name" value="16S rRNA (cytosine(1402)-N(4))-methyltransferase RsmH"/>
    <property type="match status" value="1"/>
</dbReference>
<dbReference type="PANTHER" id="PTHR11265:SF0">
    <property type="entry name" value="12S RRNA N4-METHYLCYTIDINE METHYLTRANSFERASE"/>
    <property type="match status" value="1"/>
</dbReference>
<dbReference type="PANTHER" id="PTHR11265">
    <property type="entry name" value="S-ADENOSYL-METHYLTRANSFERASE MRAW"/>
    <property type="match status" value="1"/>
</dbReference>
<dbReference type="Pfam" id="PF01795">
    <property type="entry name" value="Methyltransf_5"/>
    <property type="match status" value="1"/>
</dbReference>
<dbReference type="PIRSF" id="PIRSF004486">
    <property type="entry name" value="MraW"/>
    <property type="match status" value="1"/>
</dbReference>
<dbReference type="SUPFAM" id="SSF81799">
    <property type="entry name" value="Putative methyltransferase TM0872, insert domain"/>
    <property type="match status" value="1"/>
</dbReference>
<dbReference type="SUPFAM" id="SSF53335">
    <property type="entry name" value="S-adenosyl-L-methionine-dependent methyltransferases"/>
    <property type="match status" value="1"/>
</dbReference>
<gene>
    <name evidence="1" type="primary">rsmH</name>
    <name type="synonym">mraW</name>
    <name type="ordered locus">RT0557</name>
</gene>
<accession>Q68WG7</accession>
<protein>
    <recommendedName>
        <fullName evidence="1">Ribosomal RNA small subunit methyltransferase H</fullName>
        <ecNumber evidence="1">2.1.1.199</ecNumber>
    </recommendedName>
    <alternativeName>
        <fullName evidence="1">16S rRNA m(4)C1402 methyltransferase</fullName>
    </alternativeName>
    <alternativeName>
        <fullName evidence="1">rRNA (cytosine-N(4)-)-methyltransferase RsmH</fullName>
    </alternativeName>
</protein>
<sequence>MSQYHIPVMLSEVLEVLAPKGYESYLDCTFGAGGYSNAILKSCYCSVTSLDCDPHVIERVEQIKQDYGERFSFIKTNFADSFGKLKQQKFDGIVMDLGVSSMQLDIAGRGFSFLYDGPLDMRMSAQGFSAEEFVNTADEEEISDVIYKYGNESLSRRIAKNIIKYRKIARIDSTRKLAEIVRYSIGFRKGKIDSATKTFQAIRIYINNELGELERFLANVKNILKKNGRLVVVSFHSLEDRIVKNFFKENSAKPVARSKYAKDEIKIDQNKWLEIITHKVLTPSSQEIRLNVRARSAKLRAAKKIL</sequence>
<comment type="function">
    <text evidence="1">Specifically methylates the N4 position of cytidine in position 1402 (C1402) of 16S rRNA.</text>
</comment>
<comment type="catalytic activity">
    <reaction evidence="1">
        <text>cytidine(1402) in 16S rRNA + S-adenosyl-L-methionine = N(4)-methylcytidine(1402) in 16S rRNA + S-adenosyl-L-homocysteine + H(+)</text>
        <dbReference type="Rhea" id="RHEA:42928"/>
        <dbReference type="Rhea" id="RHEA-COMP:10286"/>
        <dbReference type="Rhea" id="RHEA-COMP:10287"/>
        <dbReference type="ChEBI" id="CHEBI:15378"/>
        <dbReference type="ChEBI" id="CHEBI:57856"/>
        <dbReference type="ChEBI" id="CHEBI:59789"/>
        <dbReference type="ChEBI" id="CHEBI:74506"/>
        <dbReference type="ChEBI" id="CHEBI:82748"/>
        <dbReference type="EC" id="2.1.1.199"/>
    </reaction>
</comment>
<comment type="subcellular location">
    <subcellularLocation>
        <location evidence="1">Cytoplasm</location>
    </subcellularLocation>
</comment>
<comment type="similarity">
    <text evidence="1">Belongs to the methyltransferase superfamily. RsmH family.</text>
</comment>
<reference key="1">
    <citation type="journal article" date="2004" name="J. Bacteriol.">
        <title>Complete genome sequence of Rickettsia typhi and comparison with sequences of other Rickettsiae.</title>
        <authorList>
            <person name="McLeod M.P."/>
            <person name="Qin X."/>
            <person name="Karpathy S.E."/>
            <person name="Gioia J."/>
            <person name="Highlander S.K."/>
            <person name="Fox G.E."/>
            <person name="McNeill T.Z."/>
            <person name="Jiang H."/>
            <person name="Muzny D."/>
            <person name="Jacob L.S."/>
            <person name="Hawes A.C."/>
            <person name="Sodergren E."/>
            <person name="Gill R."/>
            <person name="Hume J."/>
            <person name="Morgan M."/>
            <person name="Fan G."/>
            <person name="Amin A.G."/>
            <person name="Gibbs R.A."/>
            <person name="Hong C."/>
            <person name="Yu X.-J."/>
            <person name="Walker D.H."/>
            <person name="Weinstock G.M."/>
        </authorList>
    </citation>
    <scope>NUCLEOTIDE SEQUENCE [LARGE SCALE GENOMIC DNA]</scope>
    <source>
        <strain>ATCC VR-144 / Wilmington</strain>
    </source>
</reference>